<organism>
    <name type="scientific">Vibrio vulnificus (strain CMCP6)</name>
    <dbReference type="NCBI Taxonomy" id="216895"/>
    <lineage>
        <taxon>Bacteria</taxon>
        <taxon>Pseudomonadati</taxon>
        <taxon>Pseudomonadota</taxon>
        <taxon>Gammaproteobacteria</taxon>
        <taxon>Vibrionales</taxon>
        <taxon>Vibrionaceae</taxon>
        <taxon>Vibrio</taxon>
    </lineage>
</organism>
<comment type="function">
    <text evidence="1">Involved in the gluconeogenesis. Catalyzes the conversion of oxaloacetate (OAA) to phosphoenolpyruvate (PEP) through direct phosphoryl transfer between the nucleoside triphosphate and OAA.</text>
</comment>
<comment type="catalytic activity">
    <reaction evidence="1">
        <text>oxaloacetate + ATP = phosphoenolpyruvate + ADP + CO2</text>
        <dbReference type="Rhea" id="RHEA:18617"/>
        <dbReference type="ChEBI" id="CHEBI:16452"/>
        <dbReference type="ChEBI" id="CHEBI:16526"/>
        <dbReference type="ChEBI" id="CHEBI:30616"/>
        <dbReference type="ChEBI" id="CHEBI:58702"/>
        <dbReference type="ChEBI" id="CHEBI:456216"/>
        <dbReference type="EC" id="4.1.1.49"/>
    </reaction>
</comment>
<comment type="cofactor">
    <cofactor evidence="1">
        <name>Mn(2+)</name>
        <dbReference type="ChEBI" id="CHEBI:29035"/>
    </cofactor>
    <text evidence="1">Binds 1 Mn(2+) ion per subunit.</text>
</comment>
<comment type="pathway">
    <text evidence="1">Carbohydrate biosynthesis; gluconeogenesis.</text>
</comment>
<comment type="subunit">
    <text evidence="1">Monomer.</text>
</comment>
<comment type="subcellular location">
    <subcellularLocation>
        <location evidence="1">Cytoplasm</location>
    </subcellularLocation>
</comment>
<comment type="similarity">
    <text evidence="1">Belongs to the phosphoenolpyruvate carboxykinase (ATP) family.</text>
</comment>
<accession>Q8DDS6</accession>
<feature type="chain" id="PRO_0000203856" description="Phosphoenolpyruvate carboxykinase (ATP)">
    <location>
        <begin position="1"/>
        <end position="542"/>
    </location>
</feature>
<feature type="binding site" evidence="1">
    <location>
        <position position="67"/>
    </location>
    <ligand>
        <name>substrate</name>
    </ligand>
</feature>
<feature type="binding site" evidence="1">
    <location>
        <position position="208"/>
    </location>
    <ligand>
        <name>substrate</name>
    </ligand>
</feature>
<feature type="binding site" evidence="1">
    <location>
        <position position="214"/>
    </location>
    <ligand>
        <name>ATP</name>
        <dbReference type="ChEBI" id="CHEBI:30616"/>
    </ligand>
</feature>
<feature type="binding site" evidence="1">
    <location>
        <position position="214"/>
    </location>
    <ligand>
        <name>Mn(2+)</name>
        <dbReference type="ChEBI" id="CHEBI:29035"/>
    </ligand>
</feature>
<feature type="binding site" evidence="1">
    <location>
        <position position="214"/>
    </location>
    <ligand>
        <name>substrate</name>
    </ligand>
</feature>
<feature type="binding site" evidence="1">
    <location>
        <position position="233"/>
    </location>
    <ligand>
        <name>ATP</name>
        <dbReference type="ChEBI" id="CHEBI:30616"/>
    </ligand>
</feature>
<feature type="binding site" evidence="1">
    <location>
        <position position="233"/>
    </location>
    <ligand>
        <name>Mn(2+)</name>
        <dbReference type="ChEBI" id="CHEBI:29035"/>
    </ligand>
</feature>
<feature type="binding site" evidence="1">
    <location>
        <begin position="249"/>
        <end position="257"/>
    </location>
    <ligand>
        <name>ATP</name>
        <dbReference type="ChEBI" id="CHEBI:30616"/>
    </ligand>
</feature>
<feature type="binding site" evidence="1">
    <location>
        <position position="270"/>
    </location>
    <ligand>
        <name>Mn(2+)</name>
        <dbReference type="ChEBI" id="CHEBI:29035"/>
    </ligand>
</feature>
<feature type="binding site" evidence="1">
    <location>
        <position position="298"/>
    </location>
    <ligand>
        <name>ATP</name>
        <dbReference type="ChEBI" id="CHEBI:30616"/>
    </ligand>
</feature>
<feature type="binding site" evidence="1">
    <location>
        <position position="334"/>
    </location>
    <ligand>
        <name>ATP</name>
        <dbReference type="ChEBI" id="CHEBI:30616"/>
    </ligand>
</feature>
<feature type="binding site" evidence="1">
    <location>
        <position position="334"/>
    </location>
    <ligand>
        <name>substrate</name>
    </ligand>
</feature>
<feature type="binding site" evidence="1">
    <location>
        <begin position="450"/>
        <end position="451"/>
    </location>
    <ligand>
        <name>ATP</name>
        <dbReference type="ChEBI" id="CHEBI:30616"/>
    </ligand>
</feature>
<feature type="binding site" evidence="1">
    <location>
        <position position="456"/>
    </location>
    <ligand>
        <name>ATP</name>
        <dbReference type="ChEBI" id="CHEBI:30616"/>
    </ligand>
</feature>
<name>PCKA_VIBVU</name>
<reference key="1">
    <citation type="submission" date="2002-12" db="EMBL/GenBank/DDBJ databases">
        <title>Complete genome sequence of Vibrio vulnificus CMCP6.</title>
        <authorList>
            <person name="Rhee J.H."/>
            <person name="Kim S.Y."/>
            <person name="Chung S.S."/>
            <person name="Kim J.J."/>
            <person name="Moon Y.H."/>
            <person name="Jeong H."/>
            <person name="Choy H.E."/>
        </authorList>
    </citation>
    <scope>NUCLEOTIDE SEQUENCE [LARGE SCALE GENOMIC DNA]</scope>
    <source>
        <strain>CMCP6</strain>
    </source>
</reference>
<protein>
    <recommendedName>
        <fullName evidence="1">Phosphoenolpyruvate carboxykinase (ATP)</fullName>
        <shortName evidence="1">PCK</shortName>
        <shortName evidence="1">PEP carboxykinase</shortName>
        <shortName evidence="1">PEPCK</shortName>
        <ecNumber evidence="1">4.1.1.49</ecNumber>
    </recommendedName>
</protein>
<dbReference type="EC" id="4.1.1.49" evidence="1"/>
<dbReference type="EMBL" id="AE016795">
    <property type="protein sequence ID" value="AAO09384.1"/>
    <property type="molecule type" value="Genomic_DNA"/>
</dbReference>
<dbReference type="RefSeq" id="WP_011078948.1">
    <property type="nucleotide sequence ID" value="NC_004459.3"/>
</dbReference>
<dbReference type="SMR" id="Q8DDS6"/>
<dbReference type="KEGG" id="vvu:VV1_0881"/>
<dbReference type="HOGENOM" id="CLU_018247_0_1_6"/>
<dbReference type="UniPathway" id="UPA00138"/>
<dbReference type="Proteomes" id="UP000002275">
    <property type="component" value="Chromosome 1"/>
</dbReference>
<dbReference type="GO" id="GO:0005829">
    <property type="term" value="C:cytosol"/>
    <property type="evidence" value="ECO:0007669"/>
    <property type="project" value="TreeGrafter"/>
</dbReference>
<dbReference type="GO" id="GO:0005524">
    <property type="term" value="F:ATP binding"/>
    <property type="evidence" value="ECO:0007669"/>
    <property type="project" value="UniProtKB-UniRule"/>
</dbReference>
<dbReference type="GO" id="GO:0046872">
    <property type="term" value="F:metal ion binding"/>
    <property type="evidence" value="ECO:0007669"/>
    <property type="project" value="UniProtKB-KW"/>
</dbReference>
<dbReference type="GO" id="GO:0004612">
    <property type="term" value="F:phosphoenolpyruvate carboxykinase (ATP) activity"/>
    <property type="evidence" value="ECO:0007669"/>
    <property type="project" value="UniProtKB-UniRule"/>
</dbReference>
<dbReference type="GO" id="GO:0006094">
    <property type="term" value="P:gluconeogenesis"/>
    <property type="evidence" value="ECO:0007669"/>
    <property type="project" value="UniProtKB-UniRule"/>
</dbReference>
<dbReference type="CDD" id="cd00484">
    <property type="entry name" value="PEPCK_ATP"/>
    <property type="match status" value="1"/>
</dbReference>
<dbReference type="FunFam" id="2.170.8.10:FF:000001">
    <property type="entry name" value="Phosphoenolpyruvate carboxykinase (ATP)"/>
    <property type="match status" value="1"/>
</dbReference>
<dbReference type="FunFam" id="3.40.449.10:FF:000001">
    <property type="entry name" value="Phosphoenolpyruvate carboxykinase (ATP)"/>
    <property type="match status" value="1"/>
</dbReference>
<dbReference type="Gene3D" id="3.90.228.20">
    <property type="match status" value="1"/>
</dbReference>
<dbReference type="Gene3D" id="3.40.449.10">
    <property type="entry name" value="Phosphoenolpyruvate Carboxykinase, domain 1"/>
    <property type="match status" value="1"/>
</dbReference>
<dbReference type="Gene3D" id="2.170.8.10">
    <property type="entry name" value="Phosphoenolpyruvate Carboxykinase, domain 2"/>
    <property type="match status" value="1"/>
</dbReference>
<dbReference type="HAMAP" id="MF_00453">
    <property type="entry name" value="PEPCK_ATP"/>
    <property type="match status" value="1"/>
</dbReference>
<dbReference type="InterPro" id="IPR001272">
    <property type="entry name" value="PEP_carboxykinase_ATP"/>
</dbReference>
<dbReference type="InterPro" id="IPR013035">
    <property type="entry name" value="PEP_carboxykinase_C"/>
</dbReference>
<dbReference type="InterPro" id="IPR008210">
    <property type="entry name" value="PEP_carboxykinase_N"/>
</dbReference>
<dbReference type="InterPro" id="IPR015994">
    <property type="entry name" value="PEPCK_ATP_CS"/>
</dbReference>
<dbReference type="NCBIfam" id="TIGR00224">
    <property type="entry name" value="pckA"/>
    <property type="match status" value="1"/>
</dbReference>
<dbReference type="NCBIfam" id="NF006819">
    <property type="entry name" value="PRK09344.1-1"/>
    <property type="match status" value="1"/>
</dbReference>
<dbReference type="NCBIfam" id="NF006820">
    <property type="entry name" value="PRK09344.1-2"/>
    <property type="match status" value="1"/>
</dbReference>
<dbReference type="NCBIfam" id="NF006821">
    <property type="entry name" value="PRK09344.1-3"/>
    <property type="match status" value="1"/>
</dbReference>
<dbReference type="PANTHER" id="PTHR30031:SF0">
    <property type="entry name" value="PHOSPHOENOLPYRUVATE CARBOXYKINASE (ATP)"/>
    <property type="match status" value="1"/>
</dbReference>
<dbReference type="PANTHER" id="PTHR30031">
    <property type="entry name" value="PHOSPHOENOLPYRUVATE CARBOXYKINASE ATP"/>
    <property type="match status" value="1"/>
</dbReference>
<dbReference type="Pfam" id="PF01293">
    <property type="entry name" value="PEPCK_ATP"/>
    <property type="match status" value="1"/>
</dbReference>
<dbReference type="PIRSF" id="PIRSF006294">
    <property type="entry name" value="PEP_crbxkin"/>
    <property type="match status" value="1"/>
</dbReference>
<dbReference type="SUPFAM" id="SSF68923">
    <property type="entry name" value="PEP carboxykinase N-terminal domain"/>
    <property type="match status" value="1"/>
</dbReference>
<dbReference type="SUPFAM" id="SSF53795">
    <property type="entry name" value="PEP carboxykinase-like"/>
    <property type="match status" value="1"/>
</dbReference>
<dbReference type="PROSITE" id="PS00532">
    <property type="entry name" value="PEPCK_ATP"/>
    <property type="match status" value="1"/>
</dbReference>
<keyword id="KW-0067">ATP-binding</keyword>
<keyword id="KW-0963">Cytoplasm</keyword>
<keyword id="KW-0210">Decarboxylase</keyword>
<keyword id="KW-0312">Gluconeogenesis</keyword>
<keyword id="KW-0456">Lyase</keyword>
<keyword id="KW-0464">Manganese</keyword>
<keyword id="KW-0479">Metal-binding</keyword>
<keyword id="KW-0547">Nucleotide-binding</keyword>
<sequence>MTVMEHTKAASIDLTKHGLRNVKEVVRNPSYEMLFAEETRADLEGYEKGVVTELGAVAVDTGIFTGRSPKDKYIVKDATTEEHMWWTTPAVPNDNKPITQEVWNDLKQLVTNQLSGKRVFVIDGYCGANPDTRLSIRVITEVAWQAHFVKNMFIRPTEEELASFEPDFVVMNGAKCTNQKWKEHGLNSENFTVFNLTERMQLIGGTWYGGEMKKGMFAMMNYFLPLKGIASMHCSANMGKEGDVAIFFGLSGTGKTTLSTDPKRALIGDDEHGWDDDGVFNFEGGCYAKTIKLSKEAEPDIYNAIRRDALLENVTVRNDGSINFDDGSKTENTRVSYPIHHIENIVKPVSKGGHANKVIFLSADAFGVLPPVSKLTPEQTKYHFLSGFTAKLAGTERGITEPTPTFSACFGAAFLTLHPTKYAEVLVKRMEEAGAEAYLVNTGWNGSGKRISIQDTRGIIDAILDGSIEEAPTKHVPIFNLEVPTSLPGVDPTILDPRDTYVDPLQWESKAQDLAQRFINNFAKYTDNAEGQSLVAAGPQLD</sequence>
<gene>
    <name evidence="1" type="primary">pckA</name>
    <name type="ordered locus">VV1_0881</name>
</gene>
<proteinExistence type="inferred from homology"/>
<evidence type="ECO:0000255" key="1">
    <source>
        <dbReference type="HAMAP-Rule" id="MF_00453"/>
    </source>
</evidence>